<evidence type="ECO:0000255" key="1">
    <source>
        <dbReference type="HAMAP-Rule" id="MF_00406"/>
    </source>
</evidence>
<feature type="chain" id="PRO_1000049834" description="3-hydroxyacyl-[acyl-carrier-protein] dehydratase FabZ">
    <location>
        <begin position="1"/>
        <end position="157"/>
    </location>
</feature>
<feature type="active site" evidence="1">
    <location>
        <position position="58"/>
    </location>
</feature>
<sequence length="157" mass="17188">MSDDNQTKLEAADIQALLAVLPHRYPFLLIDRIVDIDGDVSATGIKNVTINEPHFTGHFPENPIMPGVLIVEAMAQTAGAISLLQRKTGRPGVVYFMTIDNAKFRRPVVPGDRLLLHVKKIKQRANISKYECVAEVDGVKVAEAEVAAMISVADENL</sequence>
<reference key="1">
    <citation type="journal article" date="2009" name="PLoS ONE">
        <title>Genome degradation in Brucella ovis corresponds with narrowing of its host range and tissue tropism.</title>
        <authorList>
            <person name="Tsolis R.M."/>
            <person name="Seshadri R."/>
            <person name="Santos R.L."/>
            <person name="Sangari F.J."/>
            <person name="Lobo J.M."/>
            <person name="de Jong M.F."/>
            <person name="Ren Q."/>
            <person name="Myers G."/>
            <person name="Brinkac L.M."/>
            <person name="Nelson W.C."/>
            <person name="Deboy R.T."/>
            <person name="Angiuoli S."/>
            <person name="Khouri H."/>
            <person name="Dimitrov G."/>
            <person name="Robinson J.R."/>
            <person name="Mulligan S."/>
            <person name="Walker R.L."/>
            <person name="Elzer P.E."/>
            <person name="Hassan K.A."/>
            <person name="Paulsen I.T."/>
        </authorList>
    </citation>
    <scope>NUCLEOTIDE SEQUENCE [LARGE SCALE GENOMIC DNA]</scope>
    <source>
        <strain>ATCC 25840 / 63/290 / NCTC 10512</strain>
    </source>
</reference>
<comment type="function">
    <text evidence="1">Involved in unsaturated fatty acids biosynthesis. Catalyzes the dehydration of short chain beta-hydroxyacyl-ACPs and long chain saturated and unsaturated beta-hydroxyacyl-ACPs.</text>
</comment>
<comment type="catalytic activity">
    <reaction evidence="1">
        <text>a (3R)-hydroxyacyl-[ACP] = a (2E)-enoyl-[ACP] + H2O</text>
        <dbReference type="Rhea" id="RHEA:13097"/>
        <dbReference type="Rhea" id="RHEA-COMP:9925"/>
        <dbReference type="Rhea" id="RHEA-COMP:9945"/>
        <dbReference type="ChEBI" id="CHEBI:15377"/>
        <dbReference type="ChEBI" id="CHEBI:78784"/>
        <dbReference type="ChEBI" id="CHEBI:78827"/>
        <dbReference type="EC" id="4.2.1.59"/>
    </reaction>
</comment>
<comment type="subcellular location">
    <subcellularLocation>
        <location evidence="1">Cytoplasm</location>
    </subcellularLocation>
</comment>
<comment type="similarity">
    <text evidence="1">Belongs to the thioester dehydratase family. FabZ subfamily.</text>
</comment>
<name>FABZ_BRUO2</name>
<proteinExistence type="inferred from homology"/>
<organism>
    <name type="scientific">Brucella ovis (strain ATCC 25840 / 63/290 / NCTC 10512)</name>
    <dbReference type="NCBI Taxonomy" id="444178"/>
    <lineage>
        <taxon>Bacteria</taxon>
        <taxon>Pseudomonadati</taxon>
        <taxon>Pseudomonadota</taxon>
        <taxon>Alphaproteobacteria</taxon>
        <taxon>Hyphomicrobiales</taxon>
        <taxon>Brucellaceae</taxon>
        <taxon>Brucella/Ochrobactrum group</taxon>
        <taxon>Brucella</taxon>
    </lineage>
</organism>
<keyword id="KW-0963">Cytoplasm</keyword>
<keyword id="KW-0441">Lipid A biosynthesis</keyword>
<keyword id="KW-0444">Lipid biosynthesis</keyword>
<keyword id="KW-0443">Lipid metabolism</keyword>
<keyword id="KW-0456">Lyase</keyword>
<dbReference type="EC" id="4.2.1.59" evidence="1"/>
<dbReference type="EMBL" id="CP000708">
    <property type="protein sequence ID" value="ABQ60259.1"/>
    <property type="molecule type" value="Genomic_DNA"/>
</dbReference>
<dbReference type="RefSeq" id="WP_004688426.1">
    <property type="nucleotide sequence ID" value="NC_009505.1"/>
</dbReference>
<dbReference type="SMR" id="A5VQS4"/>
<dbReference type="GeneID" id="55590834"/>
<dbReference type="KEGG" id="bov:BOV_1110"/>
<dbReference type="HOGENOM" id="CLU_078912_1_2_5"/>
<dbReference type="Proteomes" id="UP000006383">
    <property type="component" value="Chromosome I"/>
</dbReference>
<dbReference type="GO" id="GO:0005737">
    <property type="term" value="C:cytoplasm"/>
    <property type="evidence" value="ECO:0007669"/>
    <property type="project" value="UniProtKB-SubCell"/>
</dbReference>
<dbReference type="GO" id="GO:0016020">
    <property type="term" value="C:membrane"/>
    <property type="evidence" value="ECO:0007669"/>
    <property type="project" value="GOC"/>
</dbReference>
<dbReference type="GO" id="GO:0019171">
    <property type="term" value="F:(3R)-hydroxyacyl-[acyl-carrier-protein] dehydratase activity"/>
    <property type="evidence" value="ECO:0007669"/>
    <property type="project" value="UniProtKB-EC"/>
</dbReference>
<dbReference type="GO" id="GO:0006633">
    <property type="term" value="P:fatty acid biosynthetic process"/>
    <property type="evidence" value="ECO:0007669"/>
    <property type="project" value="UniProtKB-UniRule"/>
</dbReference>
<dbReference type="GO" id="GO:0009245">
    <property type="term" value="P:lipid A biosynthetic process"/>
    <property type="evidence" value="ECO:0007669"/>
    <property type="project" value="UniProtKB-UniRule"/>
</dbReference>
<dbReference type="CDD" id="cd01288">
    <property type="entry name" value="FabZ"/>
    <property type="match status" value="1"/>
</dbReference>
<dbReference type="FunFam" id="3.10.129.10:FF:000001">
    <property type="entry name" value="3-hydroxyacyl-[acyl-carrier-protein] dehydratase FabZ"/>
    <property type="match status" value="1"/>
</dbReference>
<dbReference type="Gene3D" id="3.10.129.10">
    <property type="entry name" value="Hotdog Thioesterase"/>
    <property type="match status" value="1"/>
</dbReference>
<dbReference type="HAMAP" id="MF_00406">
    <property type="entry name" value="FabZ"/>
    <property type="match status" value="1"/>
</dbReference>
<dbReference type="InterPro" id="IPR013114">
    <property type="entry name" value="FabA_FabZ"/>
</dbReference>
<dbReference type="InterPro" id="IPR010084">
    <property type="entry name" value="FabZ"/>
</dbReference>
<dbReference type="InterPro" id="IPR029069">
    <property type="entry name" value="HotDog_dom_sf"/>
</dbReference>
<dbReference type="NCBIfam" id="TIGR01750">
    <property type="entry name" value="fabZ"/>
    <property type="match status" value="1"/>
</dbReference>
<dbReference type="NCBIfam" id="NF000582">
    <property type="entry name" value="PRK00006.1"/>
    <property type="match status" value="1"/>
</dbReference>
<dbReference type="PANTHER" id="PTHR30272">
    <property type="entry name" value="3-HYDROXYACYL-[ACYL-CARRIER-PROTEIN] DEHYDRATASE"/>
    <property type="match status" value="1"/>
</dbReference>
<dbReference type="PANTHER" id="PTHR30272:SF1">
    <property type="entry name" value="3-HYDROXYACYL-[ACYL-CARRIER-PROTEIN] DEHYDRATASE"/>
    <property type="match status" value="1"/>
</dbReference>
<dbReference type="Pfam" id="PF07977">
    <property type="entry name" value="FabA"/>
    <property type="match status" value="1"/>
</dbReference>
<dbReference type="SUPFAM" id="SSF54637">
    <property type="entry name" value="Thioesterase/thiol ester dehydrase-isomerase"/>
    <property type="match status" value="1"/>
</dbReference>
<gene>
    <name evidence="1" type="primary">fabZ</name>
    <name type="ordered locus">BOV_1110</name>
</gene>
<accession>A5VQS4</accession>
<protein>
    <recommendedName>
        <fullName evidence="1">3-hydroxyacyl-[acyl-carrier-protein] dehydratase FabZ</fullName>
        <ecNumber evidence="1">4.2.1.59</ecNumber>
    </recommendedName>
    <alternativeName>
        <fullName evidence="1">(3R)-hydroxymyristoyl-[acyl-carrier-protein] dehydratase</fullName>
        <shortName evidence="1">(3R)-hydroxymyristoyl-ACP dehydrase</shortName>
    </alternativeName>
    <alternativeName>
        <fullName evidence="1">Beta-hydroxyacyl-ACP dehydratase</fullName>
    </alternativeName>
</protein>